<comment type="function">
    <text evidence="1">Catalyzes the dehydration of D-mannonate.</text>
</comment>
<comment type="catalytic activity">
    <reaction evidence="1">
        <text>D-mannonate = 2-dehydro-3-deoxy-D-gluconate + H2O</text>
        <dbReference type="Rhea" id="RHEA:20097"/>
        <dbReference type="ChEBI" id="CHEBI:15377"/>
        <dbReference type="ChEBI" id="CHEBI:17767"/>
        <dbReference type="ChEBI" id="CHEBI:57990"/>
        <dbReference type="EC" id="4.2.1.8"/>
    </reaction>
</comment>
<comment type="cofactor">
    <cofactor evidence="1">
        <name>Fe(2+)</name>
        <dbReference type="ChEBI" id="CHEBI:29033"/>
    </cofactor>
    <cofactor evidence="1">
        <name>Mn(2+)</name>
        <dbReference type="ChEBI" id="CHEBI:29035"/>
    </cofactor>
</comment>
<comment type="pathway">
    <text evidence="1">Carbohydrate metabolism; pentose and glucuronate interconversion.</text>
</comment>
<comment type="similarity">
    <text evidence="1">Belongs to the mannonate dehydratase family.</text>
</comment>
<gene>
    <name evidence="1" type="primary">uxuA</name>
    <name type="ordered locus">SeSA_A3317</name>
</gene>
<sequence>MKQTWRWYGPNDPVTLSDVRQAGATGVVTALHHIPNGEIWSVDEIQKRKAIVEEAGLEWSVVESVPIHEDIKTHTGQYDLWIKNYQQTLRNLAQCGIYTVCYNFMPVLDWTRTDLEYVLPDGSKALRFDQIEFAAFELHILKRPGAEADYTAEEIAQAERRFATMSEEDKARLTRNIIAGLPGAEEGYTLEQFRQHLATYKDIDKAKLREHFAYFLKAIIPVADEVGVRMAVHPDDPPRPILGLPRIVSTIEDMQWMVETVNSMANGFTMCTGSYGVRADNDLVDMIKQFGPRIYFTHLRSTLREENPKTFHEAAHLHGDVDMYEVVKAIVEEEHRRKAEGSDDLIPMRPDHGHQMLDDLKKKTNPGYSAIGRLKGLAEVRGVELAIQRAFFSK</sequence>
<reference key="1">
    <citation type="journal article" date="2011" name="J. Bacteriol.">
        <title>Comparative genomics of 28 Salmonella enterica isolates: evidence for CRISPR-mediated adaptive sublineage evolution.</title>
        <authorList>
            <person name="Fricke W.F."/>
            <person name="Mammel M.K."/>
            <person name="McDermott P.F."/>
            <person name="Tartera C."/>
            <person name="White D.G."/>
            <person name="Leclerc J.E."/>
            <person name="Ravel J."/>
            <person name="Cebula T.A."/>
        </authorList>
    </citation>
    <scope>NUCLEOTIDE SEQUENCE [LARGE SCALE GENOMIC DNA]</scope>
    <source>
        <strain>CVM19633</strain>
    </source>
</reference>
<proteinExistence type="inferred from homology"/>
<evidence type="ECO:0000255" key="1">
    <source>
        <dbReference type="HAMAP-Rule" id="MF_00106"/>
    </source>
</evidence>
<accession>B4TVB1</accession>
<feature type="chain" id="PRO_1000094224" description="Mannonate dehydratase">
    <location>
        <begin position="1"/>
        <end position="394"/>
    </location>
</feature>
<name>UXUA_SALSV</name>
<organism>
    <name type="scientific">Salmonella schwarzengrund (strain CVM19633)</name>
    <dbReference type="NCBI Taxonomy" id="439843"/>
    <lineage>
        <taxon>Bacteria</taxon>
        <taxon>Pseudomonadati</taxon>
        <taxon>Pseudomonadota</taxon>
        <taxon>Gammaproteobacteria</taxon>
        <taxon>Enterobacterales</taxon>
        <taxon>Enterobacteriaceae</taxon>
        <taxon>Salmonella</taxon>
    </lineage>
</organism>
<dbReference type="EC" id="4.2.1.8" evidence="1"/>
<dbReference type="EMBL" id="CP001127">
    <property type="protein sequence ID" value="ACF92439.1"/>
    <property type="molecule type" value="Genomic_DNA"/>
</dbReference>
<dbReference type="RefSeq" id="WP_000815491.1">
    <property type="nucleotide sequence ID" value="NC_011094.1"/>
</dbReference>
<dbReference type="SMR" id="B4TVB1"/>
<dbReference type="KEGG" id="sew:SeSA_A3317"/>
<dbReference type="HOGENOM" id="CLU_058621_2_0_6"/>
<dbReference type="UniPathway" id="UPA00246"/>
<dbReference type="Proteomes" id="UP000001865">
    <property type="component" value="Chromosome"/>
</dbReference>
<dbReference type="GO" id="GO:0008198">
    <property type="term" value="F:ferrous iron binding"/>
    <property type="evidence" value="ECO:0007669"/>
    <property type="project" value="TreeGrafter"/>
</dbReference>
<dbReference type="GO" id="GO:0030145">
    <property type="term" value="F:manganese ion binding"/>
    <property type="evidence" value="ECO:0007669"/>
    <property type="project" value="TreeGrafter"/>
</dbReference>
<dbReference type="GO" id="GO:0008927">
    <property type="term" value="F:mannonate dehydratase activity"/>
    <property type="evidence" value="ECO:0007669"/>
    <property type="project" value="UniProtKB-UniRule"/>
</dbReference>
<dbReference type="GO" id="GO:0042840">
    <property type="term" value="P:D-glucuronate catabolic process"/>
    <property type="evidence" value="ECO:0007669"/>
    <property type="project" value="TreeGrafter"/>
</dbReference>
<dbReference type="FunFam" id="3.20.20.150:FF:000004">
    <property type="entry name" value="Mannonate dehydratase"/>
    <property type="match status" value="1"/>
</dbReference>
<dbReference type="FunFam" id="3.20.20.150:FF:000005">
    <property type="entry name" value="Mannonate dehydratase"/>
    <property type="match status" value="1"/>
</dbReference>
<dbReference type="Gene3D" id="3.20.20.150">
    <property type="entry name" value="Divalent-metal-dependent TIM barrel enzymes"/>
    <property type="match status" value="2"/>
</dbReference>
<dbReference type="HAMAP" id="MF_00106">
    <property type="entry name" value="UxuA"/>
    <property type="match status" value="1"/>
</dbReference>
<dbReference type="InterPro" id="IPR004628">
    <property type="entry name" value="Man_deHydtase"/>
</dbReference>
<dbReference type="InterPro" id="IPR036237">
    <property type="entry name" value="Xyl_isomerase-like_sf"/>
</dbReference>
<dbReference type="NCBIfam" id="NF003027">
    <property type="entry name" value="PRK03906.1"/>
    <property type="match status" value="1"/>
</dbReference>
<dbReference type="NCBIfam" id="TIGR00695">
    <property type="entry name" value="uxuA"/>
    <property type="match status" value="1"/>
</dbReference>
<dbReference type="PANTHER" id="PTHR30387">
    <property type="entry name" value="MANNONATE DEHYDRATASE"/>
    <property type="match status" value="1"/>
</dbReference>
<dbReference type="PANTHER" id="PTHR30387:SF2">
    <property type="entry name" value="MANNONATE DEHYDRATASE"/>
    <property type="match status" value="1"/>
</dbReference>
<dbReference type="Pfam" id="PF03786">
    <property type="entry name" value="UxuA"/>
    <property type="match status" value="1"/>
</dbReference>
<dbReference type="PIRSF" id="PIRSF016049">
    <property type="entry name" value="Man_dehyd"/>
    <property type="match status" value="1"/>
</dbReference>
<dbReference type="SUPFAM" id="SSF51658">
    <property type="entry name" value="Xylose isomerase-like"/>
    <property type="match status" value="1"/>
</dbReference>
<protein>
    <recommendedName>
        <fullName evidence="1">Mannonate dehydratase</fullName>
        <ecNumber evidence="1">4.2.1.8</ecNumber>
    </recommendedName>
    <alternativeName>
        <fullName evidence="1">D-mannonate hydro-lyase</fullName>
    </alternativeName>
</protein>
<keyword id="KW-0408">Iron</keyword>
<keyword id="KW-0456">Lyase</keyword>
<keyword id="KW-0464">Manganese</keyword>